<proteinExistence type="inferred from homology"/>
<evidence type="ECO:0000255" key="1">
    <source>
        <dbReference type="HAMAP-Rule" id="MF_01224"/>
    </source>
</evidence>
<reference key="1">
    <citation type="submission" date="2007-06" db="EMBL/GenBank/DDBJ databases">
        <title>Complete sequence of chromosome of Staphylococcus aureus subsp. aureus JH1.</title>
        <authorList>
            <consortium name="US DOE Joint Genome Institute"/>
            <person name="Copeland A."/>
            <person name="Lucas S."/>
            <person name="Lapidus A."/>
            <person name="Barry K."/>
            <person name="Detter J.C."/>
            <person name="Glavina del Rio T."/>
            <person name="Hammon N."/>
            <person name="Israni S."/>
            <person name="Dalin E."/>
            <person name="Tice H."/>
            <person name="Pitluck S."/>
            <person name="Chain P."/>
            <person name="Malfatti S."/>
            <person name="Shin M."/>
            <person name="Vergez L."/>
            <person name="Schmutz J."/>
            <person name="Larimer F."/>
            <person name="Land M."/>
            <person name="Hauser L."/>
            <person name="Kyrpides N."/>
            <person name="Ivanova N."/>
            <person name="Tomasz A."/>
            <person name="Richardson P."/>
        </authorList>
    </citation>
    <scope>NUCLEOTIDE SEQUENCE [LARGE SCALE GENOMIC DNA]</scope>
    <source>
        <strain>JH1</strain>
    </source>
</reference>
<organism>
    <name type="scientific">Staphylococcus aureus (strain JH1)</name>
    <dbReference type="NCBI Taxonomy" id="359787"/>
    <lineage>
        <taxon>Bacteria</taxon>
        <taxon>Bacillati</taxon>
        <taxon>Bacillota</taxon>
        <taxon>Bacilli</taxon>
        <taxon>Bacillales</taxon>
        <taxon>Staphylococcaceae</taxon>
        <taxon>Staphylococcus</taxon>
    </lineage>
</organism>
<dbReference type="EC" id="4.6.1.17" evidence="1"/>
<dbReference type="EMBL" id="CP000736">
    <property type="protein sequence ID" value="ABR53166.1"/>
    <property type="molecule type" value="Genomic_DNA"/>
</dbReference>
<dbReference type="SMR" id="A6U3Z8"/>
<dbReference type="KEGG" id="sah:SaurJH1_2341"/>
<dbReference type="HOGENOM" id="CLU_074693_1_1_9"/>
<dbReference type="UniPathway" id="UPA00344"/>
<dbReference type="GO" id="GO:0061799">
    <property type="term" value="F:cyclic pyranopterin monophosphate synthase activity"/>
    <property type="evidence" value="ECO:0007669"/>
    <property type="project" value="UniProtKB-UniRule"/>
</dbReference>
<dbReference type="GO" id="GO:0006777">
    <property type="term" value="P:Mo-molybdopterin cofactor biosynthetic process"/>
    <property type="evidence" value="ECO:0007669"/>
    <property type="project" value="UniProtKB-UniRule"/>
</dbReference>
<dbReference type="CDD" id="cd01420">
    <property type="entry name" value="MoaC_PE"/>
    <property type="match status" value="1"/>
</dbReference>
<dbReference type="Gene3D" id="3.30.70.640">
    <property type="entry name" value="Molybdopterin cofactor biosynthesis C (MoaC) domain"/>
    <property type="match status" value="1"/>
</dbReference>
<dbReference type="HAMAP" id="MF_01224_B">
    <property type="entry name" value="MoaC_B"/>
    <property type="match status" value="1"/>
</dbReference>
<dbReference type="InterPro" id="IPR023045">
    <property type="entry name" value="MoaC"/>
</dbReference>
<dbReference type="InterPro" id="IPR047594">
    <property type="entry name" value="MoaC_bact/euk"/>
</dbReference>
<dbReference type="InterPro" id="IPR036522">
    <property type="entry name" value="MoaC_sf"/>
</dbReference>
<dbReference type="InterPro" id="IPR050105">
    <property type="entry name" value="MoCo_biosynth_MoaA/MoaC"/>
</dbReference>
<dbReference type="InterPro" id="IPR002820">
    <property type="entry name" value="Mopterin_CF_biosynth-C_dom"/>
</dbReference>
<dbReference type="NCBIfam" id="TIGR00581">
    <property type="entry name" value="moaC"/>
    <property type="match status" value="1"/>
</dbReference>
<dbReference type="NCBIfam" id="NF006870">
    <property type="entry name" value="PRK09364.1"/>
    <property type="match status" value="1"/>
</dbReference>
<dbReference type="PANTHER" id="PTHR22960">
    <property type="entry name" value="MOLYBDOPTERIN COFACTOR SYNTHESIS PROTEIN A"/>
    <property type="match status" value="1"/>
</dbReference>
<dbReference type="Pfam" id="PF01967">
    <property type="entry name" value="MoaC"/>
    <property type="match status" value="1"/>
</dbReference>
<dbReference type="SUPFAM" id="SSF55040">
    <property type="entry name" value="Molybdenum cofactor biosynthesis protein C, MoaC"/>
    <property type="match status" value="1"/>
</dbReference>
<gene>
    <name evidence="1" type="primary">moaC</name>
    <name type="ordered locus">SaurJH1_2341</name>
</gene>
<protein>
    <recommendedName>
        <fullName evidence="1">Cyclic pyranopterin monophosphate synthase</fullName>
        <ecNumber evidence="1">4.6.1.17</ecNumber>
    </recommendedName>
    <alternativeName>
        <fullName evidence="1">Molybdenum cofactor biosynthesis protein C</fullName>
    </alternativeName>
</protein>
<sequence length="164" mass="17637">MTEFTHINQQGHAKMVDVSDKQITKRTAVAHSSITVNETIFKQISNNTNTKGNVLNTAQIAGIMAAKNTSTIIPMCHPLPLTGIDVHFSWDETNAPLYTLNIQTTVSTTGKTGVEMEALTAASATALTIYDMTKAVDKGMIIGETYLESKSGGKSGDFQRQSGQ</sequence>
<comment type="function">
    <text evidence="1">Catalyzes the conversion of (8S)-3',8-cyclo-7,8-dihydroguanosine 5'-triphosphate to cyclic pyranopterin monophosphate (cPMP).</text>
</comment>
<comment type="catalytic activity">
    <reaction evidence="1">
        <text>(8S)-3',8-cyclo-7,8-dihydroguanosine 5'-triphosphate = cyclic pyranopterin phosphate + diphosphate</text>
        <dbReference type="Rhea" id="RHEA:49580"/>
        <dbReference type="ChEBI" id="CHEBI:33019"/>
        <dbReference type="ChEBI" id="CHEBI:59648"/>
        <dbReference type="ChEBI" id="CHEBI:131766"/>
        <dbReference type="EC" id="4.6.1.17"/>
    </reaction>
</comment>
<comment type="pathway">
    <text evidence="1">Cofactor biosynthesis; molybdopterin biosynthesis.</text>
</comment>
<comment type="subunit">
    <text evidence="1">Homohexamer; trimer of dimers.</text>
</comment>
<comment type="similarity">
    <text evidence="1">Belongs to the MoaC family.</text>
</comment>
<feature type="chain" id="PRO_1000085688" description="Cyclic pyranopterin monophosphate synthase">
    <location>
        <begin position="1"/>
        <end position="164"/>
    </location>
</feature>
<feature type="active site" evidence="1">
    <location>
        <position position="131"/>
    </location>
</feature>
<feature type="binding site" evidence="1">
    <location>
        <begin position="75"/>
        <end position="77"/>
    </location>
    <ligand>
        <name>substrate</name>
    </ligand>
</feature>
<feature type="binding site" evidence="1">
    <location>
        <begin position="116"/>
        <end position="117"/>
    </location>
    <ligand>
        <name>substrate</name>
    </ligand>
</feature>
<accession>A6U3Z8</accession>
<keyword id="KW-0456">Lyase</keyword>
<keyword id="KW-0501">Molybdenum cofactor biosynthesis</keyword>
<name>MOAC_STAA2</name>